<keyword id="KW-0002">3D-structure</keyword>
<keyword id="KW-0007">Acetylation</keyword>
<keyword id="KW-0024">Alternative initiation</keyword>
<keyword id="KW-0963">Cytoplasm</keyword>
<keyword id="KW-0903">Direct protein sequencing</keyword>
<keyword id="KW-0342">GTP-binding</keyword>
<keyword id="KW-0396">Initiation factor</keyword>
<keyword id="KW-0547">Nucleotide-binding</keyword>
<keyword id="KW-0648">Protein biosynthesis</keyword>
<keyword id="KW-1185">Reference proteome</keyword>
<dbReference type="EMBL" id="X00513">
    <property type="protein sequence ID" value="CAA25201.1"/>
    <property type="molecule type" value="Genomic_DNA"/>
</dbReference>
<dbReference type="EMBL" id="X00513">
    <property type="protein sequence ID" value="CAA25202.1"/>
    <property type="molecule type" value="Genomic_DNA"/>
</dbReference>
<dbReference type="EMBL" id="U18997">
    <property type="protein sequence ID" value="AAA57971.1"/>
    <property type="molecule type" value="Genomic_DNA"/>
</dbReference>
<dbReference type="EMBL" id="U00096">
    <property type="protein sequence ID" value="AAC76202.1"/>
    <property type="molecule type" value="Genomic_DNA"/>
</dbReference>
<dbReference type="EMBL" id="U00096">
    <property type="protein sequence ID" value="UMR55123.1"/>
    <property type="molecule type" value="Genomic_DNA"/>
</dbReference>
<dbReference type="EMBL" id="U00096">
    <property type="protein sequence ID" value="UMR55124.1"/>
    <property type="molecule type" value="Genomic_DNA"/>
</dbReference>
<dbReference type="EMBL" id="AP009048">
    <property type="protein sequence ID" value="BAE77214.1"/>
    <property type="molecule type" value="Genomic_DNA"/>
</dbReference>
<dbReference type="EMBL" id="AJ002537">
    <property type="protein sequence ID" value="CAA05529.1"/>
    <property type="molecule type" value="Genomic_DNA"/>
</dbReference>
<dbReference type="EMBL" id="AJ002537">
    <property type="protein sequence ID" value="CAA05530.1"/>
    <property type="molecule type" value="Genomic_DNA"/>
</dbReference>
<dbReference type="EMBL" id="AJ002537">
    <property type="protein sequence ID" value="CAA05531.1"/>
    <property type="molecule type" value="Genomic_DNA"/>
</dbReference>
<dbReference type="EMBL" id="AJ002538">
    <property type="protein sequence ID" value="CAA05532.1"/>
    <property type="molecule type" value="Genomic_DNA"/>
</dbReference>
<dbReference type="EMBL" id="AJ002538">
    <property type="protein sequence ID" value="CAA05533.1"/>
    <property type="molecule type" value="Genomic_DNA"/>
</dbReference>
<dbReference type="EMBL" id="AJ002538">
    <property type="protein sequence ID" value="CAA05534.1"/>
    <property type="molecule type" value="Genomic_DNA"/>
</dbReference>
<dbReference type="EMBL" id="AJ002539">
    <property type="protein sequence ID" value="CAA05535.1"/>
    <property type="molecule type" value="Genomic_DNA"/>
</dbReference>
<dbReference type="EMBL" id="AJ002539">
    <property type="protein sequence ID" value="CAA05536.1"/>
    <property type="molecule type" value="Genomic_DNA"/>
</dbReference>
<dbReference type="EMBL" id="AJ002539">
    <property type="protein sequence ID" value="CAA05537.1"/>
    <property type="molecule type" value="Genomic_DNA"/>
</dbReference>
<dbReference type="EMBL" id="AJ002540">
    <property type="protein sequence ID" value="CAA05538.1"/>
    <property type="molecule type" value="Genomic_DNA"/>
</dbReference>
<dbReference type="EMBL" id="AJ002540">
    <property type="protein sequence ID" value="CAA05539.1"/>
    <property type="molecule type" value="Genomic_DNA"/>
</dbReference>
<dbReference type="EMBL" id="AJ002540">
    <property type="protein sequence ID" value="CAA05540.1"/>
    <property type="molecule type" value="Genomic_DNA"/>
</dbReference>
<dbReference type="EMBL" id="AJ002541">
    <property type="protein sequence ID" value="CAA05541.1"/>
    <property type="molecule type" value="Genomic_DNA"/>
</dbReference>
<dbReference type="EMBL" id="AJ002541">
    <property type="protein sequence ID" value="CAA05542.1"/>
    <property type="molecule type" value="Genomic_DNA"/>
</dbReference>
<dbReference type="EMBL" id="AJ002541">
    <property type="protein sequence ID" value="CAA05543.1"/>
    <property type="molecule type" value="Genomic_DNA"/>
</dbReference>
<dbReference type="EMBL" id="AJ002542">
    <property type="protein sequence ID" value="CAA05544.1"/>
    <property type="molecule type" value="Genomic_DNA"/>
</dbReference>
<dbReference type="EMBL" id="AJ002542">
    <property type="protein sequence ID" value="CAA05545.1"/>
    <property type="molecule type" value="Genomic_DNA"/>
</dbReference>
<dbReference type="EMBL" id="AJ002542">
    <property type="protein sequence ID" value="CAA05546.1"/>
    <property type="molecule type" value="Genomic_DNA"/>
</dbReference>
<dbReference type="EMBL" id="AJ002402">
    <property type="protein sequence ID" value="CAA05386.1"/>
    <property type="molecule type" value="Genomic_DNA"/>
</dbReference>
<dbReference type="EMBL" id="AJ002403">
    <property type="protein sequence ID" value="CAA05387.1"/>
    <property type="molecule type" value="Genomic_DNA"/>
</dbReference>
<dbReference type="EMBL" id="AJ002404">
    <property type="protein sequence ID" value="CAA05388.1"/>
    <property type="molecule type" value="Genomic_DNA"/>
</dbReference>
<dbReference type="EMBL" id="AJ002405">
    <property type="protein sequence ID" value="CAA05389.1"/>
    <property type="molecule type" value="Genomic_DNA"/>
</dbReference>
<dbReference type="EMBL" id="AJ002406">
    <property type="protein sequence ID" value="CAA05390.1"/>
    <property type="molecule type" value="Genomic_DNA"/>
</dbReference>
<dbReference type="EMBL" id="AJ002407">
    <property type="protein sequence ID" value="CAA05391.1"/>
    <property type="molecule type" value="Genomic_DNA"/>
</dbReference>
<dbReference type="EMBL" id="AJ002408">
    <property type="protein sequence ID" value="CAA05392.1"/>
    <property type="molecule type" value="Genomic_DNA"/>
</dbReference>
<dbReference type="EMBL" id="AJ002409">
    <property type="protein sequence ID" value="CAA05393.1"/>
    <property type="molecule type" value="Genomic_DNA"/>
</dbReference>
<dbReference type="EMBL" id="AJ002410">
    <property type="protein sequence ID" value="CAA05394.1"/>
    <property type="molecule type" value="Genomic_DNA"/>
</dbReference>
<dbReference type="EMBL" id="AJ002411">
    <property type="protein sequence ID" value="CAA05395.1"/>
    <property type="molecule type" value="Genomic_DNA"/>
</dbReference>
<dbReference type="EMBL" id="AJ002412">
    <property type="protein sequence ID" value="CAA05396.1"/>
    <property type="molecule type" value="Genomic_DNA"/>
</dbReference>
<dbReference type="EMBL" id="AJ002413">
    <property type="protein sequence ID" value="CAA05397.1"/>
    <property type="molecule type" value="Genomic_DNA"/>
</dbReference>
<dbReference type="EMBL" id="AJ132861">
    <property type="protein sequence ID" value="CAC20126.1"/>
    <property type="molecule type" value="Genomic_DNA"/>
</dbReference>
<dbReference type="EMBL" id="AJ132861">
    <property type="protein sequence ID" value="CAC20127.1"/>
    <property type="molecule type" value="Genomic_DNA"/>
</dbReference>
<dbReference type="EMBL" id="AJ132861">
    <property type="protein sequence ID" value="CAC20128.1"/>
    <property type="molecule type" value="Genomic_DNA"/>
</dbReference>
<dbReference type="EMBL" id="AJ132862">
    <property type="protein sequence ID" value="CAC20130.1"/>
    <property type="molecule type" value="Genomic_DNA"/>
</dbReference>
<dbReference type="EMBL" id="AJ132862">
    <property type="protein sequence ID" value="CAC20131.1"/>
    <property type="molecule type" value="Genomic_DNA"/>
</dbReference>
<dbReference type="EMBL" id="AJ132862">
    <property type="protein sequence ID" value="CAC20132.1"/>
    <property type="molecule type" value="Genomic_DNA"/>
</dbReference>
<dbReference type="EMBL" id="X13775">
    <property type="protein sequence ID" value="CAA32019.1"/>
    <property type="molecule type" value="Genomic_DNA"/>
</dbReference>
<dbReference type="PIR" id="D65107">
    <property type="entry name" value="FIEC2"/>
</dbReference>
<dbReference type="RefSeq" id="NP_417637.1">
    <property type="nucleotide sequence ID" value="NC_000913.3"/>
</dbReference>
<dbReference type="RefSeq" id="WP_000133044.1">
    <property type="nucleotide sequence ID" value="NZ_STEB01000012.1"/>
</dbReference>
<dbReference type="PDB" id="1ND9">
    <property type="method" value="NMR"/>
    <property type="chains" value="A=2-50"/>
</dbReference>
<dbReference type="PDB" id="1ZO1">
    <property type="method" value="EM"/>
    <property type="resolution" value="13.80 A"/>
    <property type="chains" value="I=388-888"/>
</dbReference>
<dbReference type="PDB" id="3JCJ">
    <property type="method" value="EM"/>
    <property type="resolution" value="3.70 A"/>
    <property type="chains" value="f=1-890"/>
</dbReference>
<dbReference type="PDB" id="3JCN">
    <property type="method" value="EM"/>
    <property type="resolution" value="4.60 A"/>
    <property type="chains" value="b=1-890"/>
</dbReference>
<dbReference type="PDB" id="5ME0">
    <property type="method" value="EM"/>
    <property type="resolution" value="13.50 A"/>
    <property type="chains" value="W=1-890"/>
</dbReference>
<dbReference type="PDB" id="5ME1">
    <property type="method" value="EM"/>
    <property type="resolution" value="13.50 A"/>
    <property type="chains" value="W=1-890"/>
</dbReference>
<dbReference type="PDB" id="6O7K">
    <property type="method" value="EM"/>
    <property type="resolution" value="4.20 A"/>
    <property type="chains" value="f=382-890"/>
</dbReference>
<dbReference type="PDB" id="6O9K">
    <property type="method" value="EM"/>
    <property type="resolution" value="4.00 A"/>
    <property type="chains" value="z=382-890"/>
</dbReference>
<dbReference type="PDBsum" id="1ND9"/>
<dbReference type="PDBsum" id="1ZO1"/>
<dbReference type="PDBsum" id="3JCJ"/>
<dbReference type="PDBsum" id="3JCN"/>
<dbReference type="PDBsum" id="5ME0"/>
<dbReference type="PDBsum" id="5ME1"/>
<dbReference type="PDBsum" id="6O7K"/>
<dbReference type="PDBsum" id="6O9K"/>
<dbReference type="EMDB" id="EMD-3285"/>
<dbReference type="EMDB" id="EMD-3494"/>
<dbReference type="EMDB" id="EMD-3495"/>
<dbReference type="EMDB" id="EMD-6559"/>
<dbReference type="SMR" id="P0A705"/>
<dbReference type="BioGRID" id="4262436">
    <property type="interactions" value="79"/>
</dbReference>
<dbReference type="BioGRID" id="851997">
    <property type="interactions" value="1"/>
</dbReference>
<dbReference type="ComplexPortal" id="CPX-2244">
    <property type="entry name" value="Translation initiation factor complex"/>
</dbReference>
<dbReference type="DIP" id="DIP-36182N"/>
<dbReference type="FunCoup" id="P0A705">
    <property type="interactions" value="981"/>
</dbReference>
<dbReference type="IntAct" id="P0A705">
    <property type="interactions" value="52"/>
</dbReference>
<dbReference type="STRING" id="511145.b3168"/>
<dbReference type="iPTMnet" id="P0A705"/>
<dbReference type="jPOST" id="P0A705"/>
<dbReference type="PaxDb" id="511145-b3168"/>
<dbReference type="EnsemblBacteria" id="AAC76202">
    <property type="protein sequence ID" value="AAC76202"/>
    <property type="gene ID" value="b3168"/>
</dbReference>
<dbReference type="GeneID" id="75206024"/>
<dbReference type="GeneID" id="947684"/>
<dbReference type="KEGG" id="ecj:JW3137"/>
<dbReference type="KEGG" id="eco:b3168"/>
<dbReference type="KEGG" id="ecoc:C3026_17255"/>
<dbReference type="PATRIC" id="fig|511145.12.peg.3263"/>
<dbReference type="EchoBASE" id="EB0500"/>
<dbReference type="eggNOG" id="COG0532">
    <property type="taxonomic scope" value="Bacteria"/>
</dbReference>
<dbReference type="HOGENOM" id="CLU_006301_6_3_6"/>
<dbReference type="InParanoid" id="P0A705"/>
<dbReference type="OMA" id="RKNPWMN"/>
<dbReference type="OrthoDB" id="9811804at2"/>
<dbReference type="PhylomeDB" id="P0A705"/>
<dbReference type="BioCyc" id="EcoCyc:EG10505-MONOMER"/>
<dbReference type="BRENDA" id="3.6.5.3">
    <property type="organism ID" value="2026"/>
</dbReference>
<dbReference type="EvolutionaryTrace" id="P0A705"/>
<dbReference type="PRO" id="PR:P0A705"/>
<dbReference type="Proteomes" id="UP000000625">
    <property type="component" value="Chromosome"/>
</dbReference>
<dbReference type="GO" id="GO:0005737">
    <property type="term" value="C:cytoplasm"/>
    <property type="evidence" value="ECO:0000318"/>
    <property type="project" value="GO_Central"/>
</dbReference>
<dbReference type="GO" id="GO:0005829">
    <property type="term" value="C:cytosol"/>
    <property type="evidence" value="ECO:0000314"/>
    <property type="project" value="EcoCyc"/>
</dbReference>
<dbReference type="GO" id="GO:0016020">
    <property type="term" value="C:membrane"/>
    <property type="evidence" value="ECO:0007005"/>
    <property type="project" value="UniProtKB"/>
</dbReference>
<dbReference type="GO" id="GO:0005525">
    <property type="term" value="F:GTP binding"/>
    <property type="evidence" value="ECO:0007669"/>
    <property type="project" value="UniProtKB-KW"/>
</dbReference>
<dbReference type="GO" id="GO:0003924">
    <property type="term" value="F:GTPase activity"/>
    <property type="evidence" value="ECO:0000314"/>
    <property type="project" value="EcoCyc"/>
</dbReference>
<dbReference type="GO" id="GO:0097216">
    <property type="term" value="F:guanosine tetraphosphate binding"/>
    <property type="evidence" value="ECO:0000314"/>
    <property type="project" value="EcoCyc"/>
</dbReference>
<dbReference type="GO" id="GO:0043024">
    <property type="term" value="F:ribosomal small subunit binding"/>
    <property type="evidence" value="ECO:0000314"/>
    <property type="project" value="EcoCyc"/>
</dbReference>
<dbReference type="GO" id="GO:0003743">
    <property type="term" value="F:translation initiation factor activity"/>
    <property type="evidence" value="ECO:0000314"/>
    <property type="project" value="EcoliWiki"/>
</dbReference>
<dbReference type="GO" id="GO:0061077">
    <property type="term" value="P:chaperone-mediated protein folding"/>
    <property type="evidence" value="ECO:0000314"/>
    <property type="project" value="EcoCyc"/>
</dbReference>
<dbReference type="GO" id="GO:0009409">
    <property type="term" value="P:response to cold"/>
    <property type="evidence" value="ECO:0000314"/>
    <property type="project" value="EcoCyc"/>
</dbReference>
<dbReference type="GO" id="GO:0006413">
    <property type="term" value="P:translational initiation"/>
    <property type="evidence" value="ECO:0000314"/>
    <property type="project" value="EcoCyc"/>
</dbReference>
<dbReference type="CDD" id="cd01887">
    <property type="entry name" value="IF2_eIF5B"/>
    <property type="match status" value="1"/>
</dbReference>
<dbReference type="CDD" id="cd03702">
    <property type="entry name" value="IF2_mtIF2_II"/>
    <property type="match status" value="1"/>
</dbReference>
<dbReference type="CDD" id="cd03692">
    <property type="entry name" value="mtIF2_IVc"/>
    <property type="match status" value="1"/>
</dbReference>
<dbReference type="FunFam" id="2.40.30.10:FF:000007">
    <property type="entry name" value="Translation initiation factor IF-2"/>
    <property type="match status" value="1"/>
</dbReference>
<dbReference type="FunFam" id="2.40.30.10:FF:000008">
    <property type="entry name" value="Translation initiation factor IF-2"/>
    <property type="match status" value="1"/>
</dbReference>
<dbReference type="FunFam" id="3.30.56.50:FF:000001">
    <property type="entry name" value="Translation initiation factor IF-2"/>
    <property type="match status" value="1"/>
</dbReference>
<dbReference type="FunFam" id="3.40.50.10050:FF:000001">
    <property type="entry name" value="Translation initiation factor IF-2"/>
    <property type="match status" value="1"/>
</dbReference>
<dbReference type="FunFam" id="3.40.50.300:FF:000019">
    <property type="entry name" value="Translation initiation factor IF-2"/>
    <property type="match status" value="1"/>
</dbReference>
<dbReference type="Gene3D" id="3.40.50.300">
    <property type="entry name" value="P-loop containing nucleotide triphosphate hydrolases"/>
    <property type="match status" value="1"/>
</dbReference>
<dbReference type="Gene3D" id="3.30.56.50">
    <property type="entry name" value="Putative DNA-binding domain, N-terminal subdomain of bacterial translation initiation factor IF2"/>
    <property type="match status" value="1"/>
</dbReference>
<dbReference type="Gene3D" id="2.40.30.10">
    <property type="entry name" value="Translation factors"/>
    <property type="match status" value="2"/>
</dbReference>
<dbReference type="Gene3D" id="3.40.50.10050">
    <property type="entry name" value="Translation initiation factor IF- 2, domain 3"/>
    <property type="match status" value="1"/>
</dbReference>
<dbReference type="HAMAP" id="MF_00100_B">
    <property type="entry name" value="IF_2_B"/>
    <property type="match status" value="1"/>
</dbReference>
<dbReference type="InterPro" id="IPR009061">
    <property type="entry name" value="DNA-bd_dom_put_sf"/>
</dbReference>
<dbReference type="InterPro" id="IPR053905">
    <property type="entry name" value="EF-G-like_DII"/>
</dbReference>
<dbReference type="InterPro" id="IPR004161">
    <property type="entry name" value="EFTu-like_2"/>
</dbReference>
<dbReference type="InterPro" id="IPR013575">
    <property type="entry name" value="IF2_assoc_dom_bac"/>
</dbReference>
<dbReference type="InterPro" id="IPR044145">
    <property type="entry name" value="IF2_II"/>
</dbReference>
<dbReference type="InterPro" id="IPR006847">
    <property type="entry name" value="IF2_N"/>
</dbReference>
<dbReference type="InterPro" id="IPR027417">
    <property type="entry name" value="P-loop_NTPase"/>
</dbReference>
<dbReference type="InterPro" id="IPR005225">
    <property type="entry name" value="Small_GTP-bd"/>
</dbReference>
<dbReference type="InterPro" id="IPR000795">
    <property type="entry name" value="T_Tr_GTP-bd_dom"/>
</dbReference>
<dbReference type="InterPro" id="IPR000178">
    <property type="entry name" value="TF_IF2_bacterial-like"/>
</dbReference>
<dbReference type="InterPro" id="IPR015760">
    <property type="entry name" value="TIF_IF2"/>
</dbReference>
<dbReference type="InterPro" id="IPR023115">
    <property type="entry name" value="TIF_IF2_dom3"/>
</dbReference>
<dbReference type="InterPro" id="IPR036925">
    <property type="entry name" value="TIF_IF2_dom3_sf"/>
</dbReference>
<dbReference type="InterPro" id="IPR009000">
    <property type="entry name" value="Transl_B-barrel_sf"/>
</dbReference>
<dbReference type="NCBIfam" id="TIGR00487">
    <property type="entry name" value="IF-2"/>
    <property type="match status" value="1"/>
</dbReference>
<dbReference type="NCBIfam" id="TIGR00231">
    <property type="entry name" value="small_GTP"/>
    <property type="match status" value="1"/>
</dbReference>
<dbReference type="PANTHER" id="PTHR43381:SF5">
    <property type="entry name" value="TR-TYPE G DOMAIN-CONTAINING PROTEIN"/>
    <property type="match status" value="1"/>
</dbReference>
<dbReference type="PANTHER" id="PTHR43381">
    <property type="entry name" value="TRANSLATION INITIATION FACTOR IF-2-RELATED"/>
    <property type="match status" value="1"/>
</dbReference>
<dbReference type="Pfam" id="PF22042">
    <property type="entry name" value="EF-G_D2"/>
    <property type="match status" value="1"/>
</dbReference>
<dbReference type="Pfam" id="PF00009">
    <property type="entry name" value="GTP_EFTU"/>
    <property type="match status" value="1"/>
</dbReference>
<dbReference type="Pfam" id="PF03144">
    <property type="entry name" value="GTP_EFTU_D2"/>
    <property type="match status" value="1"/>
</dbReference>
<dbReference type="Pfam" id="PF11987">
    <property type="entry name" value="IF-2"/>
    <property type="match status" value="1"/>
</dbReference>
<dbReference type="Pfam" id="PF08364">
    <property type="entry name" value="IF2_assoc"/>
    <property type="match status" value="1"/>
</dbReference>
<dbReference type="Pfam" id="PF04760">
    <property type="entry name" value="IF2_N"/>
    <property type="match status" value="2"/>
</dbReference>
<dbReference type="SUPFAM" id="SSF52156">
    <property type="entry name" value="Initiation factor IF2/eIF5b, domain 3"/>
    <property type="match status" value="1"/>
</dbReference>
<dbReference type="SUPFAM" id="SSF52540">
    <property type="entry name" value="P-loop containing nucleoside triphosphate hydrolases"/>
    <property type="match status" value="1"/>
</dbReference>
<dbReference type="SUPFAM" id="SSF46955">
    <property type="entry name" value="Putative DNA-binding domain"/>
    <property type="match status" value="1"/>
</dbReference>
<dbReference type="SUPFAM" id="SSF50447">
    <property type="entry name" value="Translation proteins"/>
    <property type="match status" value="2"/>
</dbReference>
<dbReference type="PROSITE" id="PS51722">
    <property type="entry name" value="G_TR_2"/>
    <property type="match status" value="1"/>
</dbReference>
<dbReference type="PROSITE" id="PS01176">
    <property type="entry name" value="IF2"/>
    <property type="match status" value="1"/>
</dbReference>
<comment type="function">
    <text evidence="4 7 9 10">One of the essential components for the initiation of protein synthesis. May protect N-formylmethionyl-tRNA(fMet) from spontaneous hydrolysis. Promotes N-formylmethionyl-tRNA(fMet) binding to the 30S pre-initiation complex (PIC) (PubMed:1764105, PubMed:20224578). Also involved in the hydrolysis of GTP during the formation of the 70S ribosomal complex. Upon addition of the 50S ribosomal subunit, IF-1, IF-2 and IF-3 are released leaving the mature 70S translation initiation complex.</text>
</comment>
<comment type="subunit">
    <text evidence="7 8 9">Component of the 30S ribosomal translation pre-initiation complex which assembles on the 30S ribosome in the order IF-2 and IF-3, IF-1 and N-formylmethionyl-tRNA(fMet); mRNA recruitment can occur at any time during PIC assembly.</text>
</comment>
<comment type="subcellular location">
    <subcellularLocation>
        <location evidence="4">Cytoplasm</location>
    </subcellularLocation>
</comment>
<comment type="alternative products">
    <event type="alternative initiation"/>
    <isoform>
        <id>P0A705-1</id>
        <name evidence="12">Alpha</name>
        <sequence type="displayed"/>
    </isoform>
    <isoform>
        <id>P0A705-2</id>
        <name evidence="3 4 12">Beta</name>
        <sequence type="described" ref="VSP_018758 VSP_018759"/>
    </isoform>
    <isoform>
        <id>P0A705-3</id>
        <name evidence="3 4">Beta'</name>
        <sequence type="described" ref="VSP_018760"/>
    </isoform>
</comment>
<comment type="induction">
    <text evidence="11">Part of the metY operon that extends to pnp (PubMed:2849753).</text>
</comment>
<comment type="PTM">
    <text evidence="10">A proteolyzed form, called IF2 gamma (begins with residue 290), can be detected during purification which has all the activities expected for this protein, although it is slightly less efficient than full-length protein. It is not clear if it exists in vivo.</text>
</comment>
<comment type="disruption phenotype">
    <text evidence="3">Essential, it cannot be deleted. The C-terminal region (residues 165-890) is sufficient for growth at 42 degrees Celsius, although it grows more slowly at 37 degrees and is cold-sensitive at 30 degrees Celsius (PubMed:1374802).</text>
</comment>
<comment type="miscellaneous">
    <text evidence="5">When overexpressed partially suppresses the slow growth and decreased 70S ribosome phenotype of an rsgA knockout; RsgA may be involved in 30S ribosomal subunit biogenesis.</text>
</comment>
<comment type="miscellaneous">
    <text evidence="3">Silent mutations of codon 158, which no longer function as alternative start codons, decrease beta isoform expression to 31 to 50%, the strongest mutation is GUG to GUC.</text>
</comment>
<comment type="miscellaneous">
    <molecule>Isoform Alpha</molecule>
    <text evidence="14">Isoform alpha is approximately 2-fold more abundant than the combined beta isoforms. Optimal growth requires both alpha and beta IF2.</text>
</comment>
<comment type="miscellaneous">
    <molecule>Isoform Beta</molecule>
    <text evidence="14">Also called beta1.</text>
</comment>
<comment type="miscellaneous">
    <molecule>Isoform Beta'</molecule>
    <text evidence="14">Also called beta2.</text>
</comment>
<comment type="similarity">
    <text evidence="13">Belongs to the TRAFAC class translation factor GTPase superfamily. Classic translation factor GTPase family. IF-2 subfamily.</text>
</comment>
<protein>
    <recommendedName>
        <fullName>Translation initiation factor IF-2</fullName>
    </recommendedName>
</protein>
<name>IF2_ECOLI</name>
<gene>
    <name type="primary">infB</name>
    <name type="synonym">gicD</name>
    <name type="synonym">ssyG</name>
    <name evidence="17" type="ordered locus">b3168</name>
    <name type="ordered locus">JW3137</name>
</gene>
<reference key="1">
    <citation type="journal article" date="1984" name="Proc. Natl. Acad. Sci. U.S.A.">
        <title>Sequence of the initiation factor IF2 gene: unusual protein features and homologies with elongation factors.</title>
        <authorList>
            <person name="Sacerdot C."/>
            <person name="Dessen P."/>
            <person name="Hershey J.W.B."/>
            <person name="Plumbridge J.A."/>
            <person name="Grunberg-Manago M."/>
        </authorList>
    </citation>
    <scope>NUCLEOTIDE SEQUENCE [GENOMIC DNA]</scope>
</reference>
<reference key="2">
    <citation type="journal article" date="1997" name="FEBS Lett.">
        <title>E. coli translation initiation factor IF2--an extremely conserved protein. Comparative sequence analysis of the infB gene in clinical isolates of E. coli.</title>
        <authorList>
            <person name="Steffensen S.A.D.A."/>
            <person name="Poulsen A.B."/>
            <person name="Mortensen K.K."/>
            <person name="Sperling-Petersen H.U."/>
        </authorList>
    </citation>
    <scope>NUCLEOTIDE SEQUENCE [GENOMIC DNA]</scope>
    <source>
        <strain>Various clinical strains</strain>
    </source>
</reference>
<reference key="3">
    <citation type="submission" date="1999-02" db="EMBL/GenBank/DDBJ databases">
        <title>Sequence of the infB gene from Escherichia coli strain IQ489 and IQ490.</title>
        <authorList>
            <person name="Hedegaard J."/>
            <person name="Kristensen J.E."/>
            <person name="Nakamura Y."/>
            <person name="Sperling-Petersen H.U."/>
            <person name="Mortensen K.K."/>
        </authorList>
    </citation>
    <scope>NUCLEOTIDE SEQUENCE [GENOMIC DNA]</scope>
    <source>
        <strain>IQ489</strain>
        <strain>IQ490</strain>
    </source>
</reference>
<reference key="4">
    <citation type="journal article" date="1997" name="Science">
        <title>The complete genome sequence of Escherichia coli K-12.</title>
        <authorList>
            <person name="Blattner F.R."/>
            <person name="Plunkett G. III"/>
            <person name="Bloch C.A."/>
            <person name="Perna N.T."/>
            <person name="Burland V."/>
            <person name="Riley M."/>
            <person name="Collado-Vides J."/>
            <person name="Glasner J.D."/>
            <person name="Rode C.K."/>
            <person name="Mayhew G.F."/>
            <person name="Gregor J."/>
            <person name="Davis N.W."/>
            <person name="Kirkpatrick H.A."/>
            <person name="Goeden M.A."/>
            <person name="Rose D.J."/>
            <person name="Mau B."/>
            <person name="Shao Y."/>
        </authorList>
    </citation>
    <scope>NUCLEOTIDE SEQUENCE [LARGE SCALE GENOMIC DNA]</scope>
    <source>
        <strain>K12 / MG1655 / ATCC 47076</strain>
    </source>
</reference>
<reference key="5">
    <citation type="journal article" date="2006" name="Mol. Syst. Biol.">
        <title>Highly accurate genome sequences of Escherichia coli K-12 strains MG1655 and W3110.</title>
        <authorList>
            <person name="Hayashi K."/>
            <person name="Morooka N."/>
            <person name="Yamamoto Y."/>
            <person name="Fujita K."/>
            <person name="Isono K."/>
            <person name="Choi S."/>
            <person name="Ohtsubo E."/>
            <person name="Baba T."/>
            <person name="Wanner B.L."/>
            <person name="Mori H."/>
            <person name="Horiuchi T."/>
        </authorList>
    </citation>
    <scope>NUCLEOTIDE SEQUENCE [LARGE SCALE GENOMIC DNA]</scope>
    <source>
        <strain>K12 / W3110 / ATCC 27325 / DSM 5911</strain>
    </source>
</reference>
<reference key="6">
    <citation type="journal article" date="1984" name="Nucleic Acids Res.">
        <title>The nucleotide sequence of the cloned nusA gene and its flanking region of Escherichia coli.</title>
        <authorList>
            <person name="Ishii S."/>
            <person name="Ihara M."/>
            <person name="Maekawa T."/>
            <person name="Nakamura Y."/>
            <person name="Uchida H."/>
            <person name="Imamoto F."/>
        </authorList>
    </citation>
    <scope>NUCLEOTIDE SEQUENCE [GENOMIC DNA] OF 1-22</scope>
</reference>
<reference key="7">
    <citation type="journal article" date="1985" name="EMBO J.">
        <title>Two translational initiation sites in the infB gene are used to express initiation factor IF2 alpha and IF2 beta in Escherichia coli.</title>
        <authorList>
            <person name="Plumbridge J.A."/>
            <person name="Deville F."/>
            <person name="Sacerdot C."/>
            <person name="Petersen H.U."/>
            <person name="Cenatiempo Y."/>
            <person name="Cozzone A."/>
            <person name="Grunberg-Manago M."/>
            <person name="Hershey J.W."/>
        </authorList>
    </citation>
    <scope>PROTEIN SEQUENCE OF 1-11 AND 159-174 (ISOFORMS ALPHA AND BETA)</scope>
</reference>
<reference key="8">
    <citation type="journal article" date="1988" name="Nucleic Acids Res.">
        <title>The existence of two genes between infB and rpsO in the Escherichia coli genome: DNA sequencing and S1 nuclease mapping.</title>
        <authorList>
            <person name="Sands J.F."/>
            <person name="Regnier P."/>
            <person name="Cummings H.S."/>
            <person name="Grunberg-Manago M."/>
            <person name="Hershey J.W.B."/>
        </authorList>
    </citation>
    <scope>NUCLEOTIDE SEQUENCE [GENOMIC DNA] OF 864-890</scope>
    <scope>INDUCTION</scope>
    <scope>OPERON</scope>
    <source>
        <strain>K12</strain>
    </source>
</reference>
<reference key="9">
    <citation type="journal article" date="1991" name="Biochem. Biophys. Res. Commun.">
        <title>Tandem translation of E. coli initiation factor IF2 beta: purification and characterization in vitro of two active forms.</title>
        <authorList>
            <person name="Nyengaard N.R."/>
            <person name="Mortensen K.K."/>
            <person name="Lassen S.F."/>
            <person name="Hershey J.W.B."/>
            <person name="Sperling-Petersen H.U."/>
        </authorList>
    </citation>
    <scope>PROTEIN SEQUENCE OF 159-174 AND 166-174 (ISOFORMS BETA AND BETA')</scope>
    <scope>FUNCTION</scope>
    <scope>SUBCELLULAR LOCATION</scope>
</reference>
<reference key="10">
    <citation type="journal article" date="1992" name="J. Mol. Biol.">
        <title>Both forms of translational initiation factor IF2 (alpha and beta) are required for maximal growth of Escherichia coli. Evidence for two translational initiation codons for IF2 beta.</title>
        <authorList>
            <person name="Sacerdot C."/>
            <person name="Vachon G."/>
            <person name="Laalami S."/>
            <person name="Morel-Deville F."/>
            <person name="Cenatiempo Y."/>
            <person name="Grunberg-Manago M."/>
        </authorList>
    </citation>
    <scope>PROTEIN SEQUENCE OF 159-169 AND 166-171 (ISOFORMS BETA AND BETA')</scope>
    <scope>FUNCTION</scope>
    <scope>DISRUPTION PHENOTYPE</scope>
    <scope>MUTAGENESIS OF VAL-158 AND MET-165</scope>
</reference>
<reference key="11">
    <citation type="journal article" date="1987" name="Biochemistry">
        <title>The protein synthesis initiation factor 2 G-domain. Study of a functionally active C-terminal 65-kilodalton fragment of IF2 from Escherichia coli.</title>
        <authorList>
            <person name="Cenatiempo Y."/>
            <person name="Deville F."/>
            <person name="Dondon J."/>
            <person name="Grunberg-Manago M."/>
            <person name="Sacerdot C."/>
            <person name="Hershey J.W."/>
            <person name="Hansen H.F."/>
            <person name="Petersen H.U."/>
            <person name="Clark B.F."/>
            <person name="Kjeldgaard M."/>
        </authorList>
    </citation>
    <scope>PROTEIN SEQUENCE OF 290-304</scope>
    <scope>FUNCTION</scope>
    <scope>PROTEOLYTIC CLEAVAGE</scope>
</reference>
<reference key="12">
    <citation type="journal article" date="1991" name="Biochimie">
        <title>Structural and functional domains of E coli initiation factor IF2.</title>
        <authorList>
            <person name="Laalami S."/>
            <person name="Sacerdot C."/>
            <person name="Vachon G."/>
            <person name="Mortensen K."/>
            <person name="Sperling-Petersen H.U."/>
            <person name="Cenatiempo Y."/>
            <person name="Grunberg-Manago M."/>
        </authorList>
    </citation>
    <scope>DOMAIN STRUCTURE</scope>
    <scope>REVIEW</scope>
</reference>
<reference key="13">
    <citation type="journal article" date="1997" name="Electrophoresis">
        <title>Escherichia coli proteome analysis using the gene-protein database.</title>
        <authorList>
            <person name="VanBogelen R.A."/>
            <person name="Abshire K.Z."/>
            <person name="Moldover B."/>
            <person name="Olson E.R."/>
            <person name="Neidhardt F.C."/>
        </authorList>
    </citation>
    <scope>IDENTIFICATION BY 2D-GEL</scope>
</reference>
<reference key="14">
    <citation type="journal article" date="2008" name="J. Bacteriol.">
        <title>Genetic interaction screens with ordered overexpression and deletion clone sets implicate the Escherichia coli GTPase YjeQ in late ribosome biogenesis.</title>
        <authorList>
            <person name="Campbell T.L."/>
            <person name="Brown E.D."/>
        </authorList>
    </citation>
    <scope>PARTIALLY SUPPRESSES A RSGA MUTANT</scope>
    <source>
        <strain>K12</strain>
    </source>
</reference>
<reference key="15">
    <citation type="journal article" date="2009" name="Mol. Cell. Proteomics">
        <title>Lysine acetylation is a highly abundant and evolutionarily conserved modification in Escherichia coli.</title>
        <authorList>
            <person name="Zhang J."/>
            <person name="Sprung R."/>
            <person name="Pei J."/>
            <person name="Tan X."/>
            <person name="Kim S."/>
            <person name="Zhu H."/>
            <person name="Liu C.F."/>
            <person name="Grishin N.V."/>
            <person name="Zhao Y."/>
        </authorList>
    </citation>
    <scope>ACETYLATION [LARGE SCALE ANALYSIS] AT LYS-808</scope>
    <scope>IDENTIFICATION BY MASS SPECTROMETRY</scope>
    <source>
        <strain>K12 / JW1106</strain>
        <strain>K12 / MG1655 / ATCC 47076</strain>
    </source>
</reference>
<reference key="16">
    <citation type="journal article" date="2010" name="EMBO Rep.">
        <title>The ribosome-bound initiation factor 2 recruits initiator tRNA to the 30S initiation complex.</title>
        <authorList>
            <person name="Milon P."/>
            <person name="Carotti M."/>
            <person name="Konevega A.L."/>
            <person name="Wintermeyer W."/>
            <person name="Rodnina M.V."/>
            <person name="Gualerzi C.O."/>
        </authorList>
    </citation>
    <scope>FUNCTION</scope>
    <scope>SUBUNIT</scope>
</reference>
<reference key="17">
    <citation type="journal article" date="2012" name="Nat. Struct. Mol. Biol.">
        <title>Real-time assembly landscape of bacterial 30S translation initiation complex.</title>
        <authorList>
            <person name="Milon P."/>
            <person name="Maracci C."/>
            <person name="Filonava L."/>
            <person name="Gualerzi C.O."/>
            <person name="Rodnina M.V."/>
        </authorList>
    </citation>
    <scope>FUNCTION</scope>
    <scope>SUBUNIT</scope>
</reference>
<reference key="18">
    <citation type="journal article" date="2012" name="Crit. Rev. Biochem. Mol. Biol.">
        <title>Kinetic control of translation initiation in bacteria.</title>
        <authorList>
            <person name="Milon P."/>
            <person name="Rodnina M.V."/>
        </authorList>
    </citation>
    <scope>REVIEW</scope>
</reference>
<reference key="19">
    <citation type="journal article" date="2003" name="J. Biol. Chem.">
        <title>A conserved structural motif at the N terminus of bacterial translation initiation factor IF2.</title>
        <authorList>
            <person name="Laursen B.S."/>
            <person name="Mortensen K.K."/>
            <person name="Sperling-Petersen H.U."/>
            <person name="Hoffman D.W."/>
        </authorList>
    </citation>
    <scope>STRUCTURE BY NMR OF 2-50</scope>
    <source>
        <strain>K12</strain>
    </source>
</reference>
<reference key="20">
    <citation type="journal article" date="2011" name="PLoS Biol.">
        <title>The cryo-EM structure of a complete 30S translation initiation complex from Escherichia coli.</title>
        <authorList>
            <person name="Julian P."/>
            <person name="Milon P."/>
            <person name="Agirrezabala X."/>
            <person name="Lasso G."/>
            <person name="Gil D."/>
            <person name="Rodnina M.V."/>
            <person name="Valle M."/>
        </authorList>
    </citation>
    <scope>MODEL BY ELECTRON MICROSCOPY (18.3 ANGSTROMS)</scope>
    <scope>SUBUNIT</scope>
</reference>
<evidence type="ECO:0000250" key="1"/>
<evidence type="ECO:0000256" key="2">
    <source>
        <dbReference type="SAM" id="MobiDB-lite"/>
    </source>
</evidence>
<evidence type="ECO:0000269" key="3">
    <source>
    </source>
</evidence>
<evidence type="ECO:0000269" key="4">
    <source>
    </source>
</evidence>
<evidence type="ECO:0000269" key="5">
    <source>
    </source>
</evidence>
<evidence type="ECO:0000269" key="6">
    <source>
    </source>
</evidence>
<evidence type="ECO:0000269" key="7">
    <source>
    </source>
</evidence>
<evidence type="ECO:0000269" key="8">
    <source>
    </source>
</evidence>
<evidence type="ECO:0000269" key="9">
    <source>
    </source>
</evidence>
<evidence type="ECO:0000269" key="10">
    <source>
    </source>
</evidence>
<evidence type="ECO:0000269" key="11">
    <source>
    </source>
</evidence>
<evidence type="ECO:0000269" key="12">
    <source>
    </source>
</evidence>
<evidence type="ECO:0000305" key="13"/>
<evidence type="ECO:0000305" key="14">
    <source>
    </source>
</evidence>
<evidence type="ECO:0000305" key="15">
    <source>
    </source>
</evidence>
<evidence type="ECO:0000305" key="16">
    <source>
    </source>
</evidence>
<evidence type="ECO:0000312" key="17">
    <source>
        <dbReference type="EMBL" id="AAC76202.1"/>
    </source>
</evidence>
<evidence type="ECO:0007829" key="18">
    <source>
        <dbReference type="PDB" id="1ND9"/>
    </source>
</evidence>
<sequence>MTDVTIKTLAAERQTSVERLVQQFADAGIRKSADDSVSAQEKQTLIDHLNQKNSGPDKLTLQRKTRSTLNIPGTGGKSKSVQIEVRKKRTFVKRDPQEAERLAAEEQAQREAEEQARREAEESAKREAQQKAEREAAEQAKREAAEQAKREAAEKDKVSNQQDDMTKNAQAEKARREQEAAELKRKAEEEARRKLEEEARRVAEEARRMAEENKWTDNAEPTEDSSDYHVTTSQHARQAEDESDREVEGGRGRGRNAKAARPKKGNKHAESKADREEARAAVRGGKGGKRKGSSLQQGFQKPAQAVNRDVVIGETITVGELANKMAVKGSQVIKAMMKLGAMATINQVIDQETAQLVAEEMGHKVILRRENELEEAVMSDRDTGAAAEPRAPVVTIMGHVDHGKTSLLDYIRSTKVASGEAGGITQHIGAYHVETENGMITFLDTPGHAAFTSMRARGAQATDIVVLVVAADDGVMPQTIEAIQHAKAAQVPVVVAVNKIDKPEADPDRVKNELSQYGILPEEWGGESQFVHVSAKAGTGIDELLDAILLQAEVLELKAVRKGMASGAVIESFLDKGRGPVATVLVREGTLHKGDIVLCGFEYGRVRAMRNELGQEVLEAGPSIPVEILGLSGVPAAGDEVTVVRDEKKAREVALYRQGKFREVKLARQQKSKLENMFANMTEGEVHEVNIVLKADVQGSVEAISDSLLKLSTDEVKVKIIGSGVGGITETDATLAAASNAILVGFNVRADASARKVIEAESLDLRYYSVIYNLIDEVKAAMSGMLSPELKQQIIGLAEVRDVFKSPKFGAIAGCMVTEGVVKRHNPIRVLRDNVVIYEGELESLRRFKDDVNEVRNGMECGIGVKNYNDVRTGDVIEVFEIIEIQRTIA</sequence>
<proteinExistence type="evidence at protein level"/>
<organism>
    <name type="scientific">Escherichia coli (strain K12)</name>
    <dbReference type="NCBI Taxonomy" id="83333"/>
    <lineage>
        <taxon>Bacteria</taxon>
        <taxon>Pseudomonadati</taxon>
        <taxon>Pseudomonadota</taxon>
        <taxon>Gammaproteobacteria</taxon>
        <taxon>Enterobacterales</taxon>
        <taxon>Enterobacteriaceae</taxon>
        <taxon>Escherichia</taxon>
    </lineage>
</organism>
<feature type="chain" id="PRO_0000238785" description="Translation initiation factor IF-2">
    <location>
        <begin position="1"/>
        <end position="890"/>
    </location>
</feature>
<feature type="domain" description="tr-type G">
    <location>
        <begin position="389"/>
        <end position="558"/>
    </location>
</feature>
<feature type="region of interest" description="1">
    <location>
        <begin position="1"/>
        <end position="103"/>
    </location>
</feature>
<feature type="region of interest" description="Disordered" evidence="2">
    <location>
        <begin position="45"/>
        <end position="304"/>
    </location>
</feature>
<feature type="region of interest" description="2">
    <location>
        <begin position="104"/>
        <end position="287"/>
    </location>
</feature>
<feature type="region of interest" description="3">
    <location>
        <begin position="288"/>
        <end position="391"/>
    </location>
</feature>
<feature type="region of interest" description="G1" evidence="1">
    <location>
        <begin position="398"/>
        <end position="405"/>
    </location>
</feature>
<feature type="region of interest" description="G2" evidence="1">
    <location>
        <begin position="423"/>
        <end position="427"/>
    </location>
</feature>
<feature type="region of interest" description="G3" evidence="1">
    <location>
        <begin position="444"/>
        <end position="447"/>
    </location>
</feature>
<feature type="region of interest" description="G4" evidence="1">
    <location>
        <begin position="498"/>
        <end position="501"/>
    </location>
</feature>
<feature type="region of interest" description="G5" evidence="1">
    <location>
        <begin position="534"/>
        <end position="536"/>
    </location>
</feature>
<feature type="region of interest" description="5">
    <location>
        <begin position="541"/>
        <end position="668"/>
    </location>
</feature>
<feature type="region of interest" description="6">
    <location>
        <begin position="669"/>
        <end position="890"/>
    </location>
</feature>
<feature type="compositionally biased region" description="Polar residues" evidence="2">
    <location>
        <begin position="67"/>
        <end position="81"/>
    </location>
</feature>
<feature type="compositionally biased region" description="Basic and acidic residues" evidence="2">
    <location>
        <begin position="92"/>
        <end position="217"/>
    </location>
</feature>
<feature type="compositionally biased region" description="Basic residues" evidence="2">
    <location>
        <begin position="252"/>
        <end position="266"/>
    </location>
</feature>
<feature type="compositionally biased region" description="Basic and acidic residues" evidence="2">
    <location>
        <begin position="267"/>
        <end position="280"/>
    </location>
</feature>
<feature type="binding site" evidence="1">
    <location>
        <begin position="398"/>
        <end position="405"/>
    </location>
    <ligand>
        <name>GTP</name>
        <dbReference type="ChEBI" id="CHEBI:37565"/>
    </ligand>
</feature>
<feature type="binding site" evidence="1">
    <location>
        <begin position="444"/>
        <end position="448"/>
    </location>
    <ligand>
        <name>GTP</name>
        <dbReference type="ChEBI" id="CHEBI:37565"/>
    </ligand>
</feature>
<feature type="binding site" evidence="1">
    <location>
        <begin position="498"/>
        <end position="501"/>
    </location>
    <ligand>
        <name>GTP</name>
        <dbReference type="ChEBI" id="CHEBI:37565"/>
    </ligand>
</feature>
<feature type="modified residue" description="N6-acetyllysine" evidence="6">
    <location>
        <position position="808"/>
    </location>
</feature>
<feature type="splice variant" id="VSP_018760" description="In isoform Beta'." evidence="3 4 13">
    <location>
        <begin position="1"/>
        <end position="164"/>
    </location>
</feature>
<feature type="splice variant" id="VSP_018758" description="In isoform Beta." evidence="3 4 12 13">
    <location>
        <begin position="1"/>
        <end position="157"/>
    </location>
</feature>
<feature type="splice variant" id="VSP_018759" description="In isoform Beta." evidence="15 16">
    <original>V</original>
    <variation>M</variation>
    <location>
        <position position="158"/>
    </location>
</feature>
<feature type="sequence variant" description="In strain: IQ489.">
    <original>D</original>
    <variation>E</variation>
    <location>
        <position position="409"/>
    </location>
</feature>
<feature type="sequence variant" description="In strain: IQ490.">
    <original>G</original>
    <variation>GG</variation>
    <location>
        <position position="423"/>
    </location>
</feature>
<feature type="sequence variant" description="In strain: ECOAU9326.">
    <original>H</original>
    <variation>Q</variation>
    <location>
        <position position="432"/>
    </location>
</feature>
<feature type="sequence variant" description="In strain: ECOAU9302, ECOAU9306, ECOAU9307 and ECOAU9309.">
    <original>Q</original>
    <variation>G</variation>
    <location>
        <position position="490"/>
    </location>
</feature>
<feature type="sequence variant" description="In strain: ECOAU9306.">
    <original>G</original>
    <variation>A</variation>
    <location>
        <position position="684"/>
    </location>
</feature>
<feature type="mutagenesis site" description="Produces 35% of isoform beta (i.e. only beta2)." evidence="3">
    <original>V</original>
    <variation>A</variation>
    <location>
        <position position="158"/>
    </location>
</feature>
<feature type="mutagenesis site" description="Produces 70% of isoform beta (i.e. only beta2)." evidence="3">
    <original>V</original>
    <variation>E</variation>
    <location>
        <position position="158"/>
    </location>
</feature>
<feature type="mutagenesis site" description="Produces 66% of isoform beta (i.e. only beta2)." evidence="3">
    <original>V</original>
    <variation>G</variation>
    <location>
        <position position="158"/>
    </location>
</feature>
<feature type="mutagenesis site" description="Produces reduces amount of isoform beta (i.e. only beta1). Reduced growth at 37 degrees Celsius, greatly reduced growth at 30 degrees Celsius. Growth is more impaired; when associated with silent V-158 GUG to GUC." evidence="3">
    <original>M</original>
    <variation>I</variation>
    <variation>T</variation>
    <location>
        <position position="165"/>
    </location>
</feature>
<feature type="helix" evidence="18">
    <location>
        <begin position="8"/>
        <end position="13"/>
    </location>
</feature>
<feature type="strand" evidence="18">
    <location>
        <begin position="14"/>
        <end position="16"/>
    </location>
</feature>
<feature type="helix" evidence="18">
    <location>
        <begin position="17"/>
        <end position="27"/>
    </location>
</feature>
<feature type="strand" evidence="18">
    <location>
        <begin position="32"/>
        <end position="35"/>
    </location>
</feature>
<feature type="helix" evidence="18">
    <location>
        <begin position="41"/>
        <end position="43"/>
    </location>
</feature>
<feature type="helix" evidence="18">
    <location>
        <begin position="44"/>
        <end position="49"/>
    </location>
</feature>
<accession>P0A705</accession>
<accession>O32548</accession>
<accession>O32549</accession>
<accession>O32550</accession>
<accession>O34379</accession>
<accession>O34415</accession>
<accession>O34603</accession>
<accession>P02995</accession>
<accession>Q2M942</accession>
<accession>Q9EUZ4</accession>
<accession>Q9EUZ5</accession>
<accession>Q9EUZ6</accession>
<accession>Q9EUZ8</accession>
<accession>Q9EUZ9</accession>
<accession>Q9EV00</accession>